<feature type="chain" id="PRO_0000256658" description="NADH-ubiquinone oxidoreductase chain 2">
    <location>
        <begin position="1"/>
        <end position="347"/>
    </location>
</feature>
<feature type="transmembrane region" description="Helical" evidence="3">
    <location>
        <begin position="1"/>
        <end position="21"/>
    </location>
</feature>
<feature type="transmembrane region" description="Helical" evidence="3">
    <location>
        <begin position="25"/>
        <end position="45"/>
    </location>
</feature>
<feature type="transmembrane region" description="Helical" evidence="3">
    <location>
        <begin position="59"/>
        <end position="79"/>
    </location>
</feature>
<feature type="transmembrane region" description="Helical" evidence="3">
    <location>
        <begin position="96"/>
        <end position="116"/>
    </location>
</feature>
<feature type="transmembrane region" description="Helical" evidence="3">
    <location>
        <begin position="122"/>
        <end position="142"/>
    </location>
</feature>
<feature type="transmembrane region" description="Helical" evidence="3">
    <location>
        <begin position="145"/>
        <end position="165"/>
    </location>
</feature>
<feature type="transmembrane region" description="Helical" evidence="3">
    <location>
        <begin position="178"/>
        <end position="198"/>
    </location>
</feature>
<feature type="transmembrane region" description="Helical" evidence="3">
    <location>
        <begin position="201"/>
        <end position="221"/>
    </location>
</feature>
<feature type="transmembrane region" description="Helical" evidence="3">
    <location>
        <begin position="237"/>
        <end position="257"/>
    </location>
</feature>
<feature type="transmembrane region" description="Helical" evidence="3">
    <location>
        <begin position="276"/>
        <end position="296"/>
    </location>
</feature>
<feature type="transmembrane region" description="Helical" evidence="3">
    <location>
        <begin position="326"/>
        <end position="346"/>
    </location>
</feature>
<accession>Q330B1</accession>
<comment type="function">
    <text evidence="1">Core subunit of the mitochondrial membrane respiratory chain NADH dehydrogenase (Complex I) which catalyzes electron transfer from NADH through the respiratory chain, using ubiquinone as an electron acceptor. Essential for the catalytic activity and assembly of complex I.</text>
</comment>
<comment type="catalytic activity">
    <reaction evidence="1">
        <text>a ubiquinone + NADH + 5 H(+)(in) = a ubiquinol + NAD(+) + 4 H(+)(out)</text>
        <dbReference type="Rhea" id="RHEA:29091"/>
        <dbReference type="Rhea" id="RHEA-COMP:9565"/>
        <dbReference type="Rhea" id="RHEA-COMP:9566"/>
        <dbReference type="ChEBI" id="CHEBI:15378"/>
        <dbReference type="ChEBI" id="CHEBI:16389"/>
        <dbReference type="ChEBI" id="CHEBI:17976"/>
        <dbReference type="ChEBI" id="CHEBI:57540"/>
        <dbReference type="ChEBI" id="CHEBI:57945"/>
        <dbReference type="EC" id="7.1.1.2"/>
    </reaction>
</comment>
<comment type="subunit">
    <text evidence="1 2">Core subunit of respiratory chain NADH dehydrogenase (Complex I) which is composed of 45 different subunits. Interacts with TMEM242 (By similarity).</text>
</comment>
<comment type="subcellular location">
    <subcellularLocation>
        <location evidence="2">Mitochondrion inner membrane</location>
        <topology evidence="3">Multi-pass membrane protein</topology>
    </subcellularLocation>
</comment>
<comment type="similarity">
    <text evidence="4">Belongs to the complex I subunit 2 family.</text>
</comment>
<reference key="1">
    <citation type="submission" date="2003-12" db="EMBL/GenBank/DDBJ databases">
        <title>Bats and birds: flying in the face of mtDNA evolutionary rates.</title>
        <authorList>
            <person name="Worthington Wilmer J.M."/>
            <person name="Schneider C.J."/>
            <person name="Sorenson M.D."/>
        </authorList>
    </citation>
    <scope>NUCLEOTIDE SEQUENCE [GENOMIC DNA]</scope>
    <source>
        <strain>Isolate SL1</strain>
    </source>
</reference>
<proteinExistence type="inferred from homology"/>
<protein>
    <recommendedName>
        <fullName evidence="1">NADH-ubiquinone oxidoreductase chain 2</fullName>
        <ecNumber evidence="1">7.1.1.2</ecNumber>
    </recommendedName>
    <alternativeName>
        <fullName>NADH dehydrogenase subunit 2</fullName>
    </alternativeName>
</protein>
<dbReference type="EC" id="7.1.1.2" evidence="1"/>
<dbReference type="EMBL" id="AY504581">
    <property type="protein sequence ID" value="AAS91446.1"/>
    <property type="molecule type" value="Genomic_DNA"/>
</dbReference>
<dbReference type="SMR" id="Q330B1"/>
<dbReference type="GO" id="GO:0005743">
    <property type="term" value="C:mitochondrial inner membrane"/>
    <property type="evidence" value="ECO:0000250"/>
    <property type="project" value="UniProtKB"/>
</dbReference>
<dbReference type="GO" id="GO:0008137">
    <property type="term" value="F:NADH dehydrogenase (ubiquinone) activity"/>
    <property type="evidence" value="ECO:0000250"/>
    <property type="project" value="UniProtKB"/>
</dbReference>
<dbReference type="GO" id="GO:0006120">
    <property type="term" value="P:mitochondrial electron transport, NADH to ubiquinone"/>
    <property type="evidence" value="ECO:0000250"/>
    <property type="project" value="UniProtKB"/>
</dbReference>
<dbReference type="GO" id="GO:0032981">
    <property type="term" value="P:mitochondrial respiratory chain complex I assembly"/>
    <property type="evidence" value="ECO:0000250"/>
    <property type="project" value="UniProtKB"/>
</dbReference>
<dbReference type="InterPro" id="IPR050175">
    <property type="entry name" value="Complex_I_Subunit_2"/>
</dbReference>
<dbReference type="InterPro" id="IPR010933">
    <property type="entry name" value="NADH_DH_su2_C"/>
</dbReference>
<dbReference type="InterPro" id="IPR003917">
    <property type="entry name" value="NADH_UbQ_OxRdtase_chain2"/>
</dbReference>
<dbReference type="InterPro" id="IPR001750">
    <property type="entry name" value="ND/Mrp_TM"/>
</dbReference>
<dbReference type="PANTHER" id="PTHR46552">
    <property type="entry name" value="NADH-UBIQUINONE OXIDOREDUCTASE CHAIN 2"/>
    <property type="match status" value="1"/>
</dbReference>
<dbReference type="PANTHER" id="PTHR46552:SF1">
    <property type="entry name" value="NADH-UBIQUINONE OXIDOREDUCTASE CHAIN 2"/>
    <property type="match status" value="1"/>
</dbReference>
<dbReference type="Pfam" id="PF06444">
    <property type="entry name" value="NADH_dehy_S2_C"/>
    <property type="match status" value="1"/>
</dbReference>
<dbReference type="Pfam" id="PF00361">
    <property type="entry name" value="Proton_antipo_M"/>
    <property type="match status" value="1"/>
</dbReference>
<dbReference type="PRINTS" id="PR01436">
    <property type="entry name" value="NADHDHGNASE2"/>
</dbReference>
<evidence type="ECO:0000250" key="1">
    <source>
        <dbReference type="UniProtKB" id="P03891"/>
    </source>
</evidence>
<evidence type="ECO:0000250" key="2">
    <source>
        <dbReference type="UniProtKB" id="P03892"/>
    </source>
</evidence>
<evidence type="ECO:0000255" key="3"/>
<evidence type="ECO:0000305" key="4"/>
<sequence>MNPLIFTTIVLTIIMGTMIVMTSSHWLTVWIGFEMNMLAVIPILMKNYNPRSMEASTKYFLTQATASMLLMLAIIINLLYSGQWSITKPLNQTASIIMTLAMAMKLGLSPFHFWVPEVTQGIQLSSGLILLTWQKLAPMSILYQIFPTINLNLMLLMSVLSVAIGGWGGLNQTQLRKIMAYSSIAHMGWMTAIMAYNPTMTLLNLVIYILLTTTTFMMFMLNSSTTTLSLSHTWNKAPLLTMTILTIMLSMGGLPPLSGFLPKWMIIQEMVKNDNIITPTIMAVTALLNLYFYMRLTYSTSLTMFPSTNNMKMKWQLNNTKSTAHVSPLIILSTLALPLSPILMLLE</sequence>
<name>NU2M_BONBI</name>
<gene>
    <name evidence="1" type="primary">MT-ND2</name>
    <name type="synonym">MTND2</name>
    <name type="synonym">NADH2</name>
    <name type="synonym">ND2</name>
</gene>
<organism>
    <name type="scientific">Boneia bidens</name>
    <name type="common">Manado fruit bat</name>
    <name type="synonym">Rousettus bidens</name>
    <dbReference type="NCBI Taxonomy" id="270782"/>
    <lineage>
        <taxon>Eukaryota</taxon>
        <taxon>Metazoa</taxon>
        <taxon>Chordata</taxon>
        <taxon>Craniata</taxon>
        <taxon>Vertebrata</taxon>
        <taxon>Euteleostomi</taxon>
        <taxon>Mammalia</taxon>
        <taxon>Eutheria</taxon>
        <taxon>Laurasiatheria</taxon>
        <taxon>Chiroptera</taxon>
        <taxon>Yinpterochiroptera</taxon>
        <taxon>Pteropodoidea</taxon>
        <taxon>Pteropodidae</taxon>
        <taxon>Pteropodinae</taxon>
        <taxon>Boneia</taxon>
    </lineage>
</organism>
<geneLocation type="mitochondrion"/>
<keyword id="KW-0249">Electron transport</keyword>
<keyword id="KW-0472">Membrane</keyword>
<keyword id="KW-0496">Mitochondrion</keyword>
<keyword id="KW-0999">Mitochondrion inner membrane</keyword>
<keyword id="KW-0520">NAD</keyword>
<keyword id="KW-0679">Respiratory chain</keyword>
<keyword id="KW-1278">Translocase</keyword>
<keyword id="KW-0812">Transmembrane</keyword>
<keyword id="KW-1133">Transmembrane helix</keyword>
<keyword id="KW-0813">Transport</keyword>
<keyword id="KW-0830">Ubiquinone</keyword>